<evidence type="ECO:0000255" key="1">
    <source>
        <dbReference type="HAMAP-Rule" id="MF_00318"/>
    </source>
</evidence>
<name>ENO_BLOFL</name>
<accession>Q7VQH3</accession>
<reference key="1">
    <citation type="journal article" date="2003" name="Proc. Natl. Acad. Sci. U.S.A.">
        <title>The genome sequence of Blochmannia floridanus: comparative analysis of reduced genomes.</title>
        <authorList>
            <person name="Gil R."/>
            <person name="Silva F.J."/>
            <person name="Zientz E."/>
            <person name="Delmotte F."/>
            <person name="Gonzalez-Candelas F."/>
            <person name="Latorre A."/>
            <person name="Rausell C."/>
            <person name="Kamerbeek J."/>
            <person name="Gadau J."/>
            <person name="Hoelldobler B."/>
            <person name="van Ham R.C.H.J."/>
            <person name="Gross R."/>
            <person name="Moya A."/>
        </authorList>
    </citation>
    <scope>NUCLEOTIDE SEQUENCE [LARGE SCALE GENOMIC DNA]</scope>
</reference>
<gene>
    <name evidence="1" type="primary">eno</name>
    <name type="ordered locus">Bfl157</name>
</gene>
<proteinExistence type="inferred from homology"/>
<organism>
    <name type="scientific">Blochmanniella floridana</name>
    <dbReference type="NCBI Taxonomy" id="203907"/>
    <lineage>
        <taxon>Bacteria</taxon>
        <taxon>Pseudomonadati</taxon>
        <taxon>Pseudomonadota</taxon>
        <taxon>Gammaproteobacteria</taxon>
        <taxon>Enterobacterales</taxon>
        <taxon>Enterobacteriaceae</taxon>
        <taxon>ant endosymbionts</taxon>
        <taxon>Candidatus Blochmanniella</taxon>
    </lineage>
</organism>
<keyword id="KW-0963">Cytoplasm</keyword>
<keyword id="KW-0324">Glycolysis</keyword>
<keyword id="KW-0456">Lyase</keyword>
<keyword id="KW-0460">Magnesium</keyword>
<keyword id="KW-0479">Metal-binding</keyword>
<keyword id="KW-1185">Reference proteome</keyword>
<keyword id="KW-0964">Secreted</keyword>
<feature type="chain" id="PRO_0000133863" description="Enolase">
    <location>
        <begin position="1"/>
        <end position="447"/>
    </location>
</feature>
<feature type="active site" description="Proton donor" evidence="1">
    <location>
        <position position="210"/>
    </location>
</feature>
<feature type="active site" description="Proton acceptor" evidence="1">
    <location>
        <position position="344"/>
    </location>
</feature>
<feature type="binding site" evidence="1">
    <location>
        <position position="168"/>
    </location>
    <ligand>
        <name>(2R)-2-phosphoglycerate</name>
        <dbReference type="ChEBI" id="CHEBI:58289"/>
    </ligand>
</feature>
<feature type="binding site" evidence="1">
    <location>
        <position position="247"/>
    </location>
    <ligand>
        <name>Mg(2+)</name>
        <dbReference type="ChEBI" id="CHEBI:18420"/>
    </ligand>
</feature>
<feature type="binding site" evidence="1">
    <location>
        <position position="292"/>
    </location>
    <ligand>
        <name>Mg(2+)</name>
        <dbReference type="ChEBI" id="CHEBI:18420"/>
    </ligand>
</feature>
<feature type="binding site" evidence="1">
    <location>
        <position position="319"/>
    </location>
    <ligand>
        <name>Mg(2+)</name>
        <dbReference type="ChEBI" id="CHEBI:18420"/>
    </ligand>
</feature>
<feature type="binding site" evidence="1">
    <location>
        <position position="344"/>
    </location>
    <ligand>
        <name>(2R)-2-phosphoglycerate</name>
        <dbReference type="ChEBI" id="CHEBI:58289"/>
    </ligand>
</feature>
<feature type="binding site" evidence="1">
    <location>
        <position position="373"/>
    </location>
    <ligand>
        <name>(2R)-2-phosphoglycerate</name>
        <dbReference type="ChEBI" id="CHEBI:58289"/>
    </ligand>
</feature>
<feature type="binding site" evidence="1">
    <location>
        <position position="374"/>
    </location>
    <ligand>
        <name>(2R)-2-phosphoglycerate</name>
        <dbReference type="ChEBI" id="CHEBI:58289"/>
    </ligand>
</feature>
<feature type="binding site" evidence="1">
    <location>
        <position position="395"/>
    </location>
    <ligand>
        <name>(2R)-2-phosphoglycerate</name>
        <dbReference type="ChEBI" id="CHEBI:58289"/>
    </ligand>
</feature>
<comment type="function">
    <text evidence="1">Catalyzes the reversible conversion of 2-phosphoglycerate (2-PG) into phosphoenolpyruvate (PEP). It is essential for the degradation of carbohydrates via glycolysis.</text>
</comment>
<comment type="catalytic activity">
    <reaction evidence="1">
        <text>(2R)-2-phosphoglycerate = phosphoenolpyruvate + H2O</text>
        <dbReference type="Rhea" id="RHEA:10164"/>
        <dbReference type="ChEBI" id="CHEBI:15377"/>
        <dbReference type="ChEBI" id="CHEBI:58289"/>
        <dbReference type="ChEBI" id="CHEBI:58702"/>
        <dbReference type="EC" id="4.2.1.11"/>
    </reaction>
</comment>
<comment type="cofactor">
    <cofactor evidence="1">
        <name>Mg(2+)</name>
        <dbReference type="ChEBI" id="CHEBI:18420"/>
    </cofactor>
    <text evidence="1">Binds a second Mg(2+) ion via substrate during catalysis.</text>
</comment>
<comment type="pathway">
    <text evidence="1">Carbohydrate degradation; glycolysis; pyruvate from D-glyceraldehyde 3-phosphate: step 4/5.</text>
</comment>
<comment type="subunit">
    <text evidence="1">Component of the RNA degradosome, a multiprotein complex involved in RNA processing and mRNA degradation.</text>
</comment>
<comment type="subcellular location">
    <subcellularLocation>
        <location evidence="1">Cytoplasm</location>
    </subcellularLocation>
    <subcellularLocation>
        <location evidence="1">Secreted</location>
    </subcellularLocation>
    <subcellularLocation>
        <location evidence="1">Cell surface</location>
    </subcellularLocation>
    <text evidence="1">Fractions of enolase are present in both the cytoplasm and on the cell surface.</text>
</comment>
<comment type="similarity">
    <text evidence="1">Belongs to the enolase family.</text>
</comment>
<protein>
    <recommendedName>
        <fullName evidence="1">Enolase</fullName>
        <ecNumber evidence="1">4.2.1.11</ecNumber>
    </recommendedName>
    <alternativeName>
        <fullName evidence="1">2-phospho-D-glycerate hydro-lyase</fullName>
    </alternativeName>
    <alternativeName>
        <fullName evidence="1">2-phosphoglycerate dehydratase</fullName>
    </alternativeName>
</protein>
<dbReference type="EC" id="4.2.1.11" evidence="1"/>
<dbReference type="EMBL" id="BX248583">
    <property type="protein sequence ID" value="CAD83678.1"/>
    <property type="molecule type" value="Genomic_DNA"/>
</dbReference>
<dbReference type="SMR" id="Q7VQH3"/>
<dbReference type="STRING" id="203907.Bfl157"/>
<dbReference type="KEGG" id="bfl:Bfl157"/>
<dbReference type="eggNOG" id="COG0148">
    <property type="taxonomic scope" value="Bacteria"/>
</dbReference>
<dbReference type="HOGENOM" id="CLU_031223_2_1_6"/>
<dbReference type="OrthoDB" id="9804716at2"/>
<dbReference type="UniPathway" id="UPA00109">
    <property type="reaction ID" value="UER00187"/>
</dbReference>
<dbReference type="Proteomes" id="UP000002192">
    <property type="component" value="Chromosome"/>
</dbReference>
<dbReference type="GO" id="GO:0009986">
    <property type="term" value="C:cell surface"/>
    <property type="evidence" value="ECO:0007669"/>
    <property type="project" value="UniProtKB-SubCell"/>
</dbReference>
<dbReference type="GO" id="GO:0005576">
    <property type="term" value="C:extracellular region"/>
    <property type="evidence" value="ECO:0007669"/>
    <property type="project" value="UniProtKB-SubCell"/>
</dbReference>
<dbReference type="GO" id="GO:0000015">
    <property type="term" value="C:phosphopyruvate hydratase complex"/>
    <property type="evidence" value="ECO:0007669"/>
    <property type="project" value="InterPro"/>
</dbReference>
<dbReference type="GO" id="GO:0000287">
    <property type="term" value="F:magnesium ion binding"/>
    <property type="evidence" value="ECO:0007669"/>
    <property type="project" value="UniProtKB-UniRule"/>
</dbReference>
<dbReference type="GO" id="GO:0004634">
    <property type="term" value="F:phosphopyruvate hydratase activity"/>
    <property type="evidence" value="ECO:0007669"/>
    <property type="project" value="UniProtKB-UniRule"/>
</dbReference>
<dbReference type="GO" id="GO:0006096">
    <property type="term" value="P:glycolytic process"/>
    <property type="evidence" value="ECO:0007669"/>
    <property type="project" value="UniProtKB-UniRule"/>
</dbReference>
<dbReference type="CDD" id="cd03313">
    <property type="entry name" value="enolase"/>
    <property type="match status" value="1"/>
</dbReference>
<dbReference type="FunFam" id="3.30.390.10:FF:000001">
    <property type="entry name" value="Enolase"/>
    <property type="match status" value="1"/>
</dbReference>
<dbReference type="Gene3D" id="3.20.20.120">
    <property type="entry name" value="Enolase-like C-terminal domain"/>
    <property type="match status" value="1"/>
</dbReference>
<dbReference type="Gene3D" id="3.30.390.10">
    <property type="entry name" value="Enolase-like, N-terminal domain"/>
    <property type="match status" value="1"/>
</dbReference>
<dbReference type="HAMAP" id="MF_00318">
    <property type="entry name" value="Enolase"/>
    <property type="match status" value="1"/>
</dbReference>
<dbReference type="InterPro" id="IPR000941">
    <property type="entry name" value="Enolase"/>
</dbReference>
<dbReference type="InterPro" id="IPR036849">
    <property type="entry name" value="Enolase-like_C_sf"/>
</dbReference>
<dbReference type="InterPro" id="IPR029017">
    <property type="entry name" value="Enolase-like_N"/>
</dbReference>
<dbReference type="InterPro" id="IPR020810">
    <property type="entry name" value="Enolase_C"/>
</dbReference>
<dbReference type="InterPro" id="IPR020809">
    <property type="entry name" value="Enolase_CS"/>
</dbReference>
<dbReference type="InterPro" id="IPR020811">
    <property type="entry name" value="Enolase_N"/>
</dbReference>
<dbReference type="NCBIfam" id="TIGR01060">
    <property type="entry name" value="eno"/>
    <property type="match status" value="1"/>
</dbReference>
<dbReference type="PANTHER" id="PTHR11902">
    <property type="entry name" value="ENOLASE"/>
    <property type="match status" value="1"/>
</dbReference>
<dbReference type="PANTHER" id="PTHR11902:SF1">
    <property type="entry name" value="ENOLASE"/>
    <property type="match status" value="1"/>
</dbReference>
<dbReference type="Pfam" id="PF00113">
    <property type="entry name" value="Enolase_C"/>
    <property type="match status" value="1"/>
</dbReference>
<dbReference type="Pfam" id="PF03952">
    <property type="entry name" value="Enolase_N"/>
    <property type="match status" value="1"/>
</dbReference>
<dbReference type="PIRSF" id="PIRSF001400">
    <property type="entry name" value="Enolase"/>
    <property type="match status" value="1"/>
</dbReference>
<dbReference type="PRINTS" id="PR00148">
    <property type="entry name" value="ENOLASE"/>
</dbReference>
<dbReference type="SFLD" id="SFLDF00002">
    <property type="entry name" value="enolase"/>
    <property type="match status" value="1"/>
</dbReference>
<dbReference type="SFLD" id="SFLDG00178">
    <property type="entry name" value="enolase"/>
    <property type="match status" value="1"/>
</dbReference>
<dbReference type="SMART" id="SM01192">
    <property type="entry name" value="Enolase_C"/>
    <property type="match status" value="1"/>
</dbReference>
<dbReference type="SMART" id="SM01193">
    <property type="entry name" value="Enolase_N"/>
    <property type="match status" value="1"/>
</dbReference>
<dbReference type="SUPFAM" id="SSF51604">
    <property type="entry name" value="Enolase C-terminal domain-like"/>
    <property type="match status" value="1"/>
</dbReference>
<dbReference type="SUPFAM" id="SSF54826">
    <property type="entry name" value="Enolase N-terminal domain-like"/>
    <property type="match status" value="1"/>
</dbReference>
<dbReference type="PROSITE" id="PS00164">
    <property type="entry name" value="ENOLASE"/>
    <property type="match status" value="1"/>
</dbReference>
<sequence length="447" mass="49006">MPEIVNIISREIVDSRGNPTVESEVHTKSGFFGLASVPSGSSLGSQEALELRDNDHARFFGKGVKKSVNIINSTIRVSLLNIDVTKQSVIDEIMINLDGTNNKSQLGANSILSVSLAIAKAAASFMGMPLYQYIARLYGMSSNVYSMPVPMMNIMNGGKHADNNLDIQEFMIVPVGAKNIKQAIQMGSEISYSLKNVLNNLGISIALGDEGGYAPNLKSHSYALELINKSIEQSNYVLGKDVVLAIDCAASELFEVSTGKYVINSEKVSFTSEEFVDYLSSLARKYCIFSIEDGQSEHDWHGFSYLTKKLGDIMQLVGDDLFVTNPNLLKMGINKNVANSILVKPNQIGSLTETLNVIKLAKESGYSTIVSHRSGETEDTSIADIAVGTSAGQIKTGPVRCSERTSKYNRLIRIEEFLKDNSKFYGVNEIKNLSAQLWMYQNKNMNI</sequence>